<protein>
    <recommendedName>
        <fullName>Serum response factor-binding protein 1</fullName>
    </recommendedName>
    <alternativeName>
        <fullName>SRF-dependent transcription regulation-associated protein</fullName>
    </alternativeName>
</protein>
<comment type="function">
    <text evidence="1">May be involved in regulating transcriptional activation of cardiac genes during the aging process. May play a role in biosynthesis and/or processing of SLC2A4 in adipose cells (By similarity).</text>
</comment>
<comment type="subcellular location">
    <subcellularLocation>
        <location evidence="1">Cytoplasm</location>
        <location evidence="1">Perinuclear region</location>
    </subcellularLocation>
</comment>
<comment type="alternative products">
    <event type="alternative splicing"/>
    <isoform>
        <id>Q5XGC9-1</id>
        <name>1</name>
        <sequence type="displayed"/>
    </isoform>
    <isoform>
        <id>Q5XGC9-2</id>
        <name>2</name>
        <sequence type="described" ref="VSP_031567"/>
    </isoform>
</comment>
<name>SRFB1_XENTR</name>
<evidence type="ECO:0000250" key="1">
    <source>
        <dbReference type="UniProtKB" id="Q9CZ91"/>
    </source>
</evidence>
<evidence type="ECO:0000255" key="2"/>
<evidence type="ECO:0000256" key="3">
    <source>
        <dbReference type="SAM" id="MobiDB-lite"/>
    </source>
</evidence>
<evidence type="ECO:0000303" key="4">
    <source ref="1"/>
</evidence>
<evidence type="ECO:0000312" key="5">
    <source>
        <dbReference type="EMBL" id="AAH84513.1"/>
    </source>
</evidence>
<evidence type="ECO:0000312" key="6">
    <source>
        <dbReference type="EMBL" id="CAJ82958.1"/>
    </source>
</evidence>
<gene>
    <name evidence="5" type="primary">srfbp1</name>
    <name type="ORF">TTpA001g14.1</name>
</gene>
<sequence length="535" mass="61009">MEPVLNLNNEVVKLRKDVKKVKVLIIRKLTRHIAKLKSKKGTEELILKNQRRAQRLLEEIHSVKELKPDDVTKTALRKEISFEKVCKKPNSTAEERALARLATHPLLKQKITAIKEAIKAFKDARKTAAEGEREREKDEPEQVTKIKETKKPVQAKLNKNTEEIKSAKEHVKEEKCKNLLEDSDKGTEKALELPYVQENLPEQTAENKEQPKAQDVERPAVERPAVERPAVERPAVERPAVERPAVERPAVERPAVERPAVERPAVERPAVERPAVERPAVERPAVERPAVERPAVERPAVERPAVERPAVERPAVERPAVERPVVESPAVERPPVESPPKKKACLEQELGCELSDIEDSDKEKEYFDDSTEERFYKHSSSFEDSDSGSDNDFFIGKIRRTKKKKSDKDGSKQKEEKVPPTKEKAQTSEVQKEIPTAKSMKLKSVFCKSLSQTKPKPSFTKRETNFRQERNKRPVMPQASPLAKKPLQSKATSVRQPGRKLEAQPLHPSWEASRKRKEQQAQITKFQGKKIVFDD</sequence>
<proteinExistence type="evidence at transcript level"/>
<accession>Q5XGC9</accession>
<accession>Q28EI0</accession>
<feature type="chain" id="PRO_0000320010" description="Serum response factor-binding protein 1">
    <location>
        <begin position="1"/>
        <end position="535"/>
    </location>
</feature>
<feature type="region of interest" description="Disordered" evidence="3">
    <location>
        <begin position="128"/>
        <end position="435"/>
    </location>
</feature>
<feature type="region of interest" description="Disordered" evidence="3">
    <location>
        <begin position="453"/>
        <end position="535"/>
    </location>
</feature>
<feature type="coiled-coil region" evidence="2">
    <location>
        <begin position="5"/>
        <end position="27"/>
    </location>
</feature>
<feature type="coiled-coil region" evidence="2">
    <location>
        <begin position="107"/>
        <end position="177"/>
    </location>
</feature>
<feature type="compositionally biased region" description="Basic and acidic residues" evidence="3">
    <location>
        <begin position="128"/>
        <end position="151"/>
    </location>
</feature>
<feature type="compositionally biased region" description="Basic and acidic residues" evidence="3">
    <location>
        <begin position="159"/>
        <end position="191"/>
    </location>
</feature>
<feature type="compositionally biased region" description="Basic and acidic residues" evidence="3">
    <location>
        <begin position="205"/>
        <end position="325"/>
    </location>
</feature>
<feature type="compositionally biased region" description="Basic and acidic residues" evidence="3">
    <location>
        <begin position="361"/>
        <end position="376"/>
    </location>
</feature>
<feature type="compositionally biased region" description="Basic and acidic residues" evidence="3">
    <location>
        <begin position="406"/>
        <end position="432"/>
    </location>
</feature>
<feature type="compositionally biased region" description="Basic and acidic residues" evidence="3">
    <location>
        <begin position="460"/>
        <end position="472"/>
    </location>
</feature>
<feature type="splice variant" id="VSP_031567" description="In isoform 2." evidence="4">
    <location>
        <begin position="320"/>
        <end position="324"/>
    </location>
</feature>
<reference evidence="6" key="1">
    <citation type="submission" date="2006-10" db="EMBL/GenBank/DDBJ databases">
        <authorList>
            <consortium name="Sanger Xenopus tropicalis EST/cDNA project"/>
        </authorList>
    </citation>
    <scope>NUCLEOTIDE SEQUENCE [LARGE SCALE MRNA] (ISOFORM 2)</scope>
    <source>
        <tissue evidence="6">Tadpole</tissue>
    </source>
</reference>
<reference evidence="6" key="2">
    <citation type="submission" date="2004-10" db="EMBL/GenBank/DDBJ databases">
        <authorList>
            <consortium name="NIH - Xenopus Gene Collection (XGC) project"/>
        </authorList>
    </citation>
    <scope>NUCLEOTIDE SEQUENCE [LARGE SCALE MRNA] (ISOFORM 1)</scope>
    <source>
        <tissue evidence="5">Embryo</tissue>
    </source>
</reference>
<organism>
    <name type="scientific">Xenopus tropicalis</name>
    <name type="common">Western clawed frog</name>
    <name type="synonym">Silurana tropicalis</name>
    <dbReference type="NCBI Taxonomy" id="8364"/>
    <lineage>
        <taxon>Eukaryota</taxon>
        <taxon>Metazoa</taxon>
        <taxon>Chordata</taxon>
        <taxon>Craniata</taxon>
        <taxon>Vertebrata</taxon>
        <taxon>Euteleostomi</taxon>
        <taxon>Amphibia</taxon>
        <taxon>Batrachia</taxon>
        <taxon>Anura</taxon>
        <taxon>Pipoidea</taxon>
        <taxon>Pipidae</taxon>
        <taxon>Xenopodinae</taxon>
        <taxon>Xenopus</taxon>
        <taxon>Silurana</taxon>
    </lineage>
</organism>
<dbReference type="EMBL" id="CR848244">
    <property type="protein sequence ID" value="CAJ82958.1"/>
    <property type="molecule type" value="mRNA"/>
</dbReference>
<dbReference type="EMBL" id="BC084513">
    <property type="protein sequence ID" value="AAH84513.1"/>
    <property type="molecule type" value="mRNA"/>
</dbReference>
<dbReference type="RefSeq" id="NP_001011115.1">
    <molecule id="Q5XGC9-1"/>
    <property type="nucleotide sequence ID" value="NM_001011115.1"/>
</dbReference>
<dbReference type="SMR" id="Q5XGC9"/>
<dbReference type="FunCoup" id="Q5XGC9">
    <property type="interactions" value="3006"/>
</dbReference>
<dbReference type="STRING" id="8364.ENSXETP00000038132"/>
<dbReference type="GeneID" id="496528"/>
<dbReference type="KEGG" id="xtr:496528"/>
<dbReference type="AGR" id="Xenbase:XB-GENE-941165"/>
<dbReference type="CTD" id="153443"/>
<dbReference type="Xenbase" id="XB-GENE-941165">
    <property type="gene designation" value="srfbp1"/>
</dbReference>
<dbReference type="InParanoid" id="Q5XGC9"/>
<dbReference type="OMA" id="GFQQNEP"/>
<dbReference type="OrthoDB" id="3364872at2759"/>
<dbReference type="Proteomes" id="UP000008143">
    <property type="component" value="Chromosome 1"/>
</dbReference>
<dbReference type="GO" id="GO:0048471">
    <property type="term" value="C:perinuclear region of cytoplasm"/>
    <property type="evidence" value="ECO:0007669"/>
    <property type="project" value="UniProtKB-SubCell"/>
</dbReference>
<dbReference type="InterPro" id="IPR037393">
    <property type="entry name" value="Bud22/SRFB1"/>
</dbReference>
<dbReference type="InterPro" id="IPR015158">
    <property type="entry name" value="Bud22_dom"/>
</dbReference>
<dbReference type="PANTHER" id="PTHR23325">
    <property type="entry name" value="SERUM RESPONSE FACTOR-BINDING"/>
    <property type="match status" value="1"/>
</dbReference>
<dbReference type="PANTHER" id="PTHR23325:SF1">
    <property type="entry name" value="SERUM RESPONSE FACTOR-BINDING PROTEIN 1"/>
    <property type="match status" value="1"/>
</dbReference>
<dbReference type="Pfam" id="PF09073">
    <property type="entry name" value="BUD22"/>
    <property type="match status" value="1"/>
</dbReference>
<keyword id="KW-0025">Alternative splicing</keyword>
<keyword id="KW-0175">Coiled coil</keyword>
<keyword id="KW-0963">Cytoplasm</keyword>
<keyword id="KW-1185">Reference proteome</keyword>
<keyword id="KW-0804">Transcription</keyword>
<keyword id="KW-0805">Transcription regulation</keyword>